<proteinExistence type="inferred from homology"/>
<reference key="1">
    <citation type="submission" date="2007-04" db="EMBL/GenBank/DDBJ databases">
        <title>Complete genome sequence of the nitrogen-fixing bacterium Azorhizobium caulinodans ORS571.</title>
        <authorList>
            <person name="Lee K.B."/>
            <person name="Backer P.D."/>
            <person name="Aono T."/>
            <person name="Liu C.T."/>
            <person name="Suzuki S."/>
            <person name="Suzuki T."/>
            <person name="Kaneko T."/>
            <person name="Yamada M."/>
            <person name="Tabata S."/>
            <person name="Kupfer D.M."/>
            <person name="Najar F.Z."/>
            <person name="Wiley G.B."/>
            <person name="Roe B."/>
            <person name="Binnewies T."/>
            <person name="Ussery D."/>
            <person name="Vereecke D."/>
            <person name="Gevers D."/>
            <person name="Holsters M."/>
            <person name="Oyaizu H."/>
        </authorList>
    </citation>
    <scope>NUCLEOTIDE SEQUENCE [LARGE SCALE GENOMIC DNA]</scope>
    <source>
        <strain>ATCC 43989 / DSM 5975 / JCM 20966 / LMG 6465 / NBRC 14845 / NCIMB 13405 / ORS 571</strain>
    </source>
</reference>
<accession>A8HS13</accession>
<dbReference type="EMBL" id="AP009384">
    <property type="protein sequence ID" value="BAF90124.1"/>
    <property type="molecule type" value="Genomic_DNA"/>
</dbReference>
<dbReference type="RefSeq" id="WP_012172646.1">
    <property type="nucleotide sequence ID" value="NC_009937.1"/>
</dbReference>
<dbReference type="SMR" id="A8HS13"/>
<dbReference type="STRING" id="438753.AZC_4126"/>
<dbReference type="KEGG" id="azc:AZC_4126"/>
<dbReference type="eggNOG" id="COG0224">
    <property type="taxonomic scope" value="Bacteria"/>
</dbReference>
<dbReference type="HOGENOM" id="CLU_050669_0_1_5"/>
<dbReference type="Proteomes" id="UP000000270">
    <property type="component" value="Chromosome"/>
</dbReference>
<dbReference type="GO" id="GO:0005886">
    <property type="term" value="C:plasma membrane"/>
    <property type="evidence" value="ECO:0007669"/>
    <property type="project" value="UniProtKB-SubCell"/>
</dbReference>
<dbReference type="GO" id="GO:0045259">
    <property type="term" value="C:proton-transporting ATP synthase complex"/>
    <property type="evidence" value="ECO:0007669"/>
    <property type="project" value="UniProtKB-KW"/>
</dbReference>
<dbReference type="GO" id="GO:0005524">
    <property type="term" value="F:ATP binding"/>
    <property type="evidence" value="ECO:0007669"/>
    <property type="project" value="UniProtKB-UniRule"/>
</dbReference>
<dbReference type="GO" id="GO:0046933">
    <property type="term" value="F:proton-transporting ATP synthase activity, rotational mechanism"/>
    <property type="evidence" value="ECO:0007669"/>
    <property type="project" value="UniProtKB-UniRule"/>
</dbReference>
<dbReference type="GO" id="GO:0042777">
    <property type="term" value="P:proton motive force-driven plasma membrane ATP synthesis"/>
    <property type="evidence" value="ECO:0007669"/>
    <property type="project" value="UniProtKB-UniRule"/>
</dbReference>
<dbReference type="CDD" id="cd12151">
    <property type="entry name" value="F1-ATPase_gamma"/>
    <property type="match status" value="1"/>
</dbReference>
<dbReference type="FunFam" id="1.10.287.80:FF:000001">
    <property type="entry name" value="ATP synthase gamma chain"/>
    <property type="match status" value="1"/>
</dbReference>
<dbReference type="FunFam" id="1.10.287.80:FF:000003">
    <property type="entry name" value="ATP synthase gamma chain, chloroplastic"/>
    <property type="match status" value="1"/>
</dbReference>
<dbReference type="Gene3D" id="3.40.1380.10">
    <property type="match status" value="1"/>
</dbReference>
<dbReference type="Gene3D" id="1.10.287.80">
    <property type="entry name" value="ATP synthase, gamma subunit, helix hairpin domain"/>
    <property type="match status" value="1"/>
</dbReference>
<dbReference type="HAMAP" id="MF_00815">
    <property type="entry name" value="ATP_synth_gamma_bact"/>
    <property type="match status" value="1"/>
</dbReference>
<dbReference type="InterPro" id="IPR035968">
    <property type="entry name" value="ATP_synth_F1_ATPase_gsu"/>
</dbReference>
<dbReference type="InterPro" id="IPR000131">
    <property type="entry name" value="ATP_synth_F1_gsu"/>
</dbReference>
<dbReference type="InterPro" id="IPR023632">
    <property type="entry name" value="ATP_synth_F1_gsu_CS"/>
</dbReference>
<dbReference type="NCBIfam" id="TIGR01146">
    <property type="entry name" value="ATPsyn_F1gamma"/>
    <property type="match status" value="1"/>
</dbReference>
<dbReference type="NCBIfam" id="NF004146">
    <property type="entry name" value="PRK05621.1-4"/>
    <property type="match status" value="1"/>
</dbReference>
<dbReference type="PANTHER" id="PTHR11693">
    <property type="entry name" value="ATP SYNTHASE GAMMA CHAIN"/>
    <property type="match status" value="1"/>
</dbReference>
<dbReference type="PANTHER" id="PTHR11693:SF22">
    <property type="entry name" value="ATP SYNTHASE SUBUNIT GAMMA, MITOCHONDRIAL"/>
    <property type="match status" value="1"/>
</dbReference>
<dbReference type="Pfam" id="PF00231">
    <property type="entry name" value="ATP-synt"/>
    <property type="match status" value="1"/>
</dbReference>
<dbReference type="PIRSF" id="PIRSF039089">
    <property type="entry name" value="ATP_synthase_gamma"/>
    <property type="match status" value="1"/>
</dbReference>
<dbReference type="PRINTS" id="PR00126">
    <property type="entry name" value="ATPASEGAMMA"/>
</dbReference>
<dbReference type="SUPFAM" id="SSF52943">
    <property type="entry name" value="ATP synthase (F1-ATPase), gamma subunit"/>
    <property type="match status" value="1"/>
</dbReference>
<dbReference type="PROSITE" id="PS00153">
    <property type="entry name" value="ATPASE_GAMMA"/>
    <property type="match status" value="1"/>
</dbReference>
<keyword id="KW-0066">ATP synthesis</keyword>
<keyword id="KW-0997">Cell inner membrane</keyword>
<keyword id="KW-1003">Cell membrane</keyword>
<keyword id="KW-0139">CF(1)</keyword>
<keyword id="KW-0375">Hydrogen ion transport</keyword>
<keyword id="KW-0406">Ion transport</keyword>
<keyword id="KW-0472">Membrane</keyword>
<keyword id="KW-1185">Reference proteome</keyword>
<keyword id="KW-0813">Transport</keyword>
<comment type="function">
    <text evidence="1">Produces ATP from ADP in the presence of a proton gradient across the membrane. The gamma chain is believed to be important in regulating ATPase activity and the flow of protons through the CF(0) complex.</text>
</comment>
<comment type="subunit">
    <text evidence="1">F-type ATPases have 2 components, CF(1) - the catalytic core - and CF(0) - the membrane proton channel. CF(1) has five subunits: alpha(3), beta(3), gamma(1), delta(1), epsilon(1). CF(0) has three main subunits: a, b and c.</text>
</comment>
<comment type="subcellular location">
    <subcellularLocation>
        <location evidence="1">Cell inner membrane</location>
        <topology evidence="1">Peripheral membrane protein</topology>
    </subcellularLocation>
</comment>
<comment type="similarity">
    <text evidence="1">Belongs to the ATPase gamma chain family.</text>
</comment>
<feature type="chain" id="PRO_1000072858" description="ATP synthase gamma chain">
    <location>
        <begin position="1"/>
        <end position="289"/>
    </location>
</feature>
<sequence>MASLKDLRNRIASVKATQKITKAMQMVAAAKLRRAQMAAEAARPYAERMDSVLGNIASGVTLSADTPLLLSGTGKDEKHLLLVCTSERGLCGAFNTNIVRAVRERANLLIGQGKDVKFFCVGRKGYDQLRRLYPGQIVELVDLRSVRNLGFVNAHDIAEKIIDRFNKGEFDVCTLFFSHFKSVISQVPTAQQIIPATFEKAEGPSAVYDYEPEESEILADLLPRNVAVQIFRALLENQASFYGSQMSAMDNATRNAGDMIKKQTLIYNRTRQAMITKELIEIISGAEAV</sequence>
<gene>
    <name evidence="1" type="primary">atpG</name>
    <name type="ordered locus">AZC_4126</name>
</gene>
<organism>
    <name type="scientific">Azorhizobium caulinodans (strain ATCC 43989 / DSM 5975 / JCM 20966 / LMG 6465 / NBRC 14845 / NCIMB 13405 / ORS 571)</name>
    <dbReference type="NCBI Taxonomy" id="438753"/>
    <lineage>
        <taxon>Bacteria</taxon>
        <taxon>Pseudomonadati</taxon>
        <taxon>Pseudomonadota</taxon>
        <taxon>Alphaproteobacteria</taxon>
        <taxon>Hyphomicrobiales</taxon>
        <taxon>Xanthobacteraceae</taxon>
        <taxon>Azorhizobium</taxon>
    </lineage>
</organism>
<protein>
    <recommendedName>
        <fullName evidence="1">ATP synthase gamma chain</fullName>
    </recommendedName>
    <alternativeName>
        <fullName evidence="1">ATP synthase F1 sector gamma subunit</fullName>
    </alternativeName>
    <alternativeName>
        <fullName evidence="1">F-ATPase gamma subunit</fullName>
    </alternativeName>
</protein>
<name>ATPG_AZOC5</name>
<evidence type="ECO:0000255" key="1">
    <source>
        <dbReference type="HAMAP-Rule" id="MF_00815"/>
    </source>
</evidence>